<accession>Q02770</accession>
<accession>D6W3V1</accession>
<dbReference type="EC" id="5.2.1.8"/>
<dbReference type="EMBL" id="U39205">
    <property type="protein sequence ID" value="AAB68301.1"/>
    <property type="molecule type" value="Genomic_DNA"/>
</dbReference>
<dbReference type="EMBL" id="BK006949">
    <property type="protein sequence ID" value="DAA11367.1"/>
    <property type="molecule type" value="Genomic_DNA"/>
</dbReference>
<dbReference type="PIR" id="S60926">
    <property type="entry name" value="S60926"/>
</dbReference>
<dbReference type="RefSeq" id="NP_015261.1">
    <property type="nucleotide sequence ID" value="NM_001183878.1"/>
</dbReference>
<dbReference type="PDB" id="5GM6">
    <property type="method" value="EM"/>
    <property type="resolution" value="3.50 A"/>
    <property type="chains" value="b=1-301"/>
</dbReference>
<dbReference type="PDBsum" id="5GM6"/>
<dbReference type="EMDB" id="EMD-9524"/>
<dbReference type="SMR" id="Q02770"/>
<dbReference type="BioGRID" id="36115">
    <property type="interactions" value="73"/>
</dbReference>
<dbReference type="ComplexPortal" id="CPX-1651">
    <property type="entry name" value="PRP19-associated complex"/>
</dbReference>
<dbReference type="DIP" id="DIP-2778N"/>
<dbReference type="FunCoup" id="Q02770">
    <property type="interactions" value="1375"/>
</dbReference>
<dbReference type="IntAct" id="Q02770">
    <property type="interactions" value="7"/>
</dbReference>
<dbReference type="MINT" id="Q02770"/>
<dbReference type="STRING" id="4932.YPL064C"/>
<dbReference type="iPTMnet" id="Q02770"/>
<dbReference type="PaxDb" id="4932-YPL064C"/>
<dbReference type="PeptideAtlas" id="Q02770"/>
<dbReference type="EnsemblFungi" id="YPL064C_mRNA">
    <property type="protein sequence ID" value="YPL064C"/>
    <property type="gene ID" value="YPL064C"/>
</dbReference>
<dbReference type="GeneID" id="856041"/>
<dbReference type="KEGG" id="sce:YPL064C"/>
<dbReference type="AGR" id="SGD:S000005985"/>
<dbReference type="SGD" id="S000005985">
    <property type="gene designation" value="CWC27"/>
</dbReference>
<dbReference type="VEuPathDB" id="FungiDB:YPL064C"/>
<dbReference type="eggNOG" id="KOG0885">
    <property type="taxonomic scope" value="Eukaryota"/>
</dbReference>
<dbReference type="HOGENOM" id="CLU_012062_14_0_1"/>
<dbReference type="InParanoid" id="Q02770"/>
<dbReference type="OMA" id="RNTWFIT"/>
<dbReference type="OrthoDB" id="442970at2759"/>
<dbReference type="BioCyc" id="YEAST:G3O-33973-MONOMER"/>
<dbReference type="BioGRID-ORCS" id="856041">
    <property type="hits" value="3 hits in 10 CRISPR screens"/>
</dbReference>
<dbReference type="PRO" id="PR:Q02770"/>
<dbReference type="Proteomes" id="UP000002311">
    <property type="component" value="Chromosome XVI"/>
</dbReference>
<dbReference type="RNAct" id="Q02770">
    <property type="molecule type" value="protein"/>
</dbReference>
<dbReference type="GO" id="GO:0071013">
    <property type="term" value="C:catalytic step 2 spliceosome"/>
    <property type="evidence" value="ECO:0000318"/>
    <property type="project" value="GO_Central"/>
</dbReference>
<dbReference type="GO" id="GO:0005737">
    <property type="term" value="C:cytoplasm"/>
    <property type="evidence" value="ECO:0007669"/>
    <property type="project" value="UniProtKB-SubCell"/>
</dbReference>
<dbReference type="GO" id="GO:0000974">
    <property type="term" value="C:Prp19 complex"/>
    <property type="evidence" value="ECO:0000353"/>
    <property type="project" value="ComplexPortal"/>
</dbReference>
<dbReference type="GO" id="GO:0005684">
    <property type="term" value="C:U2-type spliceosomal complex"/>
    <property type="evidence" value="ECO:0000314"/>
    <property type="project" value="SGD"/>
</dbReference>
<dbReference type="GO" id="GO:0003755">
    <property type="term" value="F:peptidyl-prolyl cis-trans isomerase activity"/>
    <property type="evidence" value="ECO:0007669"/>
    <property type="project" value="UniProtKB-KW"/>
</dbReference>
<dbReference type="GO" id="GO:0000398">
    <property type="term" value="P:mRNA splicing, via spliceosome"/>
    <property type="evidence" value="ECO:0000303"/>
    <property type="project" value="ComplexPortal"/>
</dbReference>
<dbReference type="GO" id="GO:0006457">
    <property type="term" value="P:protein folding"/>
    <property type="evidence" value="ECO:0000318"/>
    <property type="project" value="GO_Central"/>
</dbReference>
<dbReference type="Gene3D" id="2.40.100.10">
    <property type="entry name" value="Cyclophilin-like"/>
    <property type="match status" value="1"/>
</dbReference>
<dbReference type="InterPro" id="IPR029000">
    <property type="entry name" value="Cyclophilin-like_dom_sf"/>
</dbReference>
<dbReference type="InterPro" id="IPR002130">
    <property type="entry name" value="Cyclophilin-type_PPIase_dom"/>
</dbReference>
<dbReference type="InterPro" id="IPR044666">
    <property type="entry name" value="Cyclophilin_A-like"/>
</dbReference>
<dbReference type="PANTHER" id="PTHR45625">
    <property type="entry name" value="PEPTIDYL-PROLYL CIS-TRANS ISOMERASE-RELATED"/>
    <property type="match status" value="1"/>
</dbReference>
<dbReference type="PANTHER" id="PTHR45625:SF6">
    <property type="entry name" value="SPLICEOSOME-ASSOCIATED PROTEIN CWC27 HOMOLOG"/>
    <property type="match status" value="1"/>
</dbReference>
<dbReference type="Pfam" id="PF00160">
    <property type="entry name" value="Pro_isomerase"/>
    <property type="match status" value="1"/>
</dbReference>
<dbReference type="SUPFAM" id="SSF50891">
    <property type="entry name" value="Cyclophilin-like"/>
    <property type="match status" value="1"/>
</dbReference>
<keyword id="KW-0002">3D-structure</keyword>
<keyword id="KW-0963">Cytoplasm</keyword>
<keyword id="KW-0413">Isomerase</keyword>
<keyword id="KW-0507">mRNA processing</keyword>
<keyword id="KW-0508">mRNA splicing</keyword>
<keyword id="KW-0539">Nucleus</keyword>
<keyword id="KW-1185">Reference proteome</keyword>
<keyword id="KW-0697">Rotamase</keyword>
<keyword id="KW-0747">Spliceosome</keyword>
<name>CWC27_YEAST</name>
<reference key="1">
    <citation type="journal article" date="1997" name="Nature">
        <title>The nucleotide sequence of Saccharomyces cerevisiae chromosome XVI.</title>
        <authorList>
            <person name="Bussey H."/>
            <person name="Storms R.K."/>
            <person name="Ahmed A."/>
            <person name="Albermann K."/>
            <person name="Allen E."/>
            <person name="Ansorge W."/>
            <person name="Araujo R."/>
            <person name="Aparicio A."/>
            <person name="Barrell B.G."/>
            <person name="Badcock K."/>
            <person name="Benes V."/>
            <person name="Botstein D."/>
            <person name="Bowman S."/>
            <person name="Brueckner M."/>
            <person name="Carpenter J."/>
            <person name="Cherry J.M."/>
            <person name="Chung E."/>
            <person name="Churcher C.M."/>
            <person name="Coster F."/>
            <person name="Davis K."/>
            <person name="Davis R.W."/>
            <person name="Dietrich F.S."/>
            <person name="Delius H."/>
            <person name="DiPaolo T."/>
            <person name="Dubois E."/>
            <person name="Duesterhoeft A."/>
            <person name="Duncan M."/>
            <person name="Floeth M."/>
            <person name="Fortin N."/>
            <person name="Friesen J.D."/>
            <person name="Fritz C."/>
            <person name="Goffeau A."/>
            <person name="Hall J."/>
            <person name="Hebling U."/>
            <person name="Heumann K."/>
            <person name="Hilbert H."/>
            <person name="Hillier L.W."/>
            <person name="Hunicke-Smith S."/>
            <person name="Hyman R.W."/>
            <person name="Johnston M."/>
            <person name="Kalman S."/>
            <person name="Kleine K."/>
            <person name="Komp C."/>
            <person name="Kurdi O."/>
            <person name="Lashkari D."/>
            <person name="Lew H."/>
            <person name="Lin A."/>
            <person name="Lin D."/>
            <person name="Louis E.J."/>
            <person name="Marathe R."/>
            <person name="Messenguy F."/>
            <person name="Mewes H.-W."/>
            <person name="Mirtipati S."/>
            <person name="Moestl D."/>
            <person name="Mueller-Auer S."/>
            <person name="Namath A."/>
            <person name="Nentwich U."/>
            <person name="Oefner P."/>
            <person name="Pearson D."/>
            <person name="Petel F.X."/>
            <person name="Pohl T.M."/>
            <person name="Purnelle B."/>
            <person name="Rajandream M.A."/>
            <person name="Rechmann S."/>
            <person name="Rieger M."/>
            <person name="Riles L."/>
            <person name="Roberts D."/>
            <person name="Schaefer M."/>
            <person name="Scharfe M."/>
            <person name="Scherens B."/>
            <person name="Schramm S."/>
            <person name="Schroeder M."/>
            <person name="Sdicu A.-M."/>
            <person name="Tettelin H."/>
            <person name="Urrestarazu L.A."/>
            <person name="Ushinsky S."/>
            <person name="Vierendeels F."/>
            <person name="Vissers S."/>
            <person name="Voss H."/>
            <person name="Walsh S.V."/>
            <person name="Wambutt R."/>
            <person name="Wang Y."/>
            <person name="Wedler E."/>
            <person name="Wedler H."/>
            <person name="Winnett E."/>
            <person name="Zhong W.-W."/>
            <person name="Zollner A."/>
            <person name="Vo D.H."/>
            <person name="Hani J."/>
        </authorList>
    </citation>
    <scope>NUCLEOTIDE SEQUENCE [LARGE SCALE GENOMIC DNA]</scope>
    <source>
        <strain>ATCC 204508 / S288c</strain>
    </source>
</reference>
<reference key="2">
    <citation type="journal article" date="2014" name="G3 (Bethesda)">
        <title>The reference genome sequence of Saccharomyces cerevisiae: Then and now.</title>
        <authorList>
            <person name="Engel S.R."/>
            <person name="Dietrich F.S."/>
            <person name="Fisk D.G."/>
            <person name="Binkley G."/>
            <person name="Balakrishnan R."/>
            <person name="Costanzo M.C."/>
            <person name="Dwight S.S."/>
            <person name="Hitz B.C."/>
            <person name="Karra K."/>
            <person name="Nash R.S."/>
            <person name="Weng S."/>
            <person name="Wong E.D."/>
            <person name="Lloyd P."/>
            <person name="Skrzypek M.S."/>
            <person name="Miyasato S.R."/>
            <person name="Simison M."/>
            <person name="Cherry J.M."/>
        </authorList>
    </citation>
    <scope>GENOME REANNOTATION</scope>
    <source>
        <strain>ATCC 204508 / S288c</strain>
    </source>
</reference>
<reference key="3">
    <citation type="journal article" date="2002" name="Mol. Cell. Biol.">
        <title>Proteomics analysis reveals stable multiprotein complexes in both fission and budding yeasts containing Myb-related Cdc5p/Cef1p, novel pre-mRNA splicing factors, and snRNAs.</title>
        <authorList>
            <person name="Ohi M.D."/>
            <person name="Link A.J."/>
            <person name="Ren L."/>
            <person name="Jennings J.L."/>
            <person name="McDonald W.H."/>
            <person name="Gould K.L."/>
        </authorList>
    </citation>
    <scope>IDENTIFICATION IN THE CWC COMPLEX</scope>
    <scope>FUNCTION</scope>
    <scope>IDENTIFICATION BY MASS SPECTROMETRY</scope>
</reference>
<reference key="4">
    <citation type="journal article" date="2003" name="Nature">
        <title>Global analysis of protein localization in budding yeast.</title>
        <authorList>
            <person name="Huh W.-K."/>
            <person name="Falvo J.V."/>
            <person name="Gerke L.C."/>
            <person name="Carroll A.S."/>
            <person name="Howson R.W."/>
            <person name="Weissman J.S."/>
            <person name="O'Shea E.K."/>
        </authorList>
    </citation>
    <scope>SUBCELLULAR LOCATION [LARGE SCALE ANALYSIS]</scope>
</reference>
<reference key="5">
    <citation type="journal article" date="2003" name="Nature">
        <title>Global analysis of protein expression in yeast.</title>
        <authorList>
            <person name="Ghaemmaghami S."/>
            <person name="Huh W.-K."/>
            <person name="Bower K."/>
            <person name="Howson R.W."/>
            <person name="Belle A."/>
            <person name="Dephoure N."/>
            <person name="O'Shea E.K."/>
            <person name="Weissman J.S."/>
        </authorList>
    </citation>
    <scope>LEVEL OF PROTEIN EXPRESSION [LARGE SCALE ANALYSIS]</scope>
</reference>
<sequence length="301" mass="35026">MSSNIEPQTTAKCILYTTKGNIAIELWAKECPETCKRFLSMLSDGTFTNGEFKELKPTQWLMFNANSTGEYRTVAEEKNPRIRFNRDGLLGWDRRRNTWFITVLADSKHVLNDCNVFGKIVGKSIYIFREILGGEIEASSRDNDVKRFMYPAVLKDVEITIPFFEDIFGSKRRLEDNEKKEQEPAKKLVKSAKVKMVYEDEQEDDDGDVQKLKPRKRMILPAWIKDDSRSEGIKLDASLDQPQEALIREKTELHDNVDEATTKETESQENIKEEPMDKRERETLAMLSKFQERIKNKNILK</sequence>
<gene>
    <name type="primary">CWC27</name>
    <name type="synonym">CYP7</name>
    <name type="ordered locus">YPL064C</name>
</gene>
<feature type="chain" id="PRO_0000064189" description="Peptidyl-prolyl isomerase CWC27">
    <location>
        <begin position="1"/>
        <end position="301"/>
    </location>
</feature>
<feature type="domain" description="PPIase cyclophilin-type">
    <location>
        <begin position="9"/>
        <end position="159"/>
    </location>
</feature>
<feature type="region of interest" description="Disordered" evidence="2">
    <location>
        <begin position="251"/>
        <end position="280"/>
    </location>
</feature>
<evidence type="ECO:0000250" key="1"/>
<evidence type="ECO:0000256" key="2">
    <source>
        <dbReference type="SAM" id="MobiDB-lite"/>
    </source>
</evidence>
<evidence type="ECO:0000269" key="3">
    <source>
    </source>
</evidence>
<evidence type="ECO:0000269" key="4">
    <source>
    </source>
</evidence>
<evidence type="ECO:0000269" key="5">
    <source>
    </source>
</evidence>
<evidence type="ECO:0000305" key="6"/>
<protein>
    <recommendedName>
        <fullName>Peptidyl-prolyl isomerase CWC27</fullName>
        <shortName>PPIase CWC27</shortName>
        <ecNumber>5.2.1.8</ecNumber>
    </recommendedName>
    <alternativeName>
        <fullName>Complexed with CEF1 protein 27</fullName>
    </alternativeName>
    <alternativeName>
        <fullName>Rotamase CWC27</fullName>
    </alternativeName>
</protein>
<comment type="function">
    <text evidence="1 3">PPIases accelerate the folding of proteins. Catalyzes the cis-trans isomerization of proline imidic peptide bonds in oligopeptides. Involved in pre-mRNA splicing (PubMed:11884590).</text>
</comment>
<comment type="catalytic activity">
    <reaction>
        <text>[protein]-peptidylproline (omega=180) = [protein]-peptidylproline (omega=0)</text>
        <dbReference type="Rhea" id="RHEA:16237"/>
        <dbReference type="Rhea" id="RHEA-COMP:10747"/>
        <dbReference type="Rhea" id="RHEA-COMP:10748"/>
        <dbReference type="ChEBI" id="CHEBI:83833"/>
        <dbReference type="ChEBI" id="CHEBI:83834"/>
        <dbReference type="EC" id="5.2.1.8"/>
    </reaction>
</comment>
<comment type="subunit">
    <text evidence="3">Belongs to the CWC complex (or CEF1-associated complex), a spliceosome subcomplex composed of the U2, U5 and U6 snRNAs and at least BUD13, BUD31, BRR2, CDC40, CEF1, CLF1, CUS1, CWC2, CWC15, CWC21, CWC22, CWC23, CWC24, CWC25, CWC27, ECM2, HSH155, IST3, ISY1, LEA1, MSL1, NTC20, PRP8, PRP9, PRP11, PRP19, PRP21, PRP22, PRP45, PRP46, SLU7, SMB1, SMD1, SMD2, SMD3, SMX2, SMX3, SNT309, SNU114, SPP2, SYF1, SYF2, RSE1 and YJU2.</text>
</comment>
<comment type="subcellular location">
    <subcellularLocation>
        <location evidence="4">Cytoplasm</location>
    </subcellularLocation>
    <subcellularLocation>
        <location evidence="4">Nucleus</location>
    </subcellularLocation>
</comment>
<comment type="miscellaneous">
    <text evidence="5">Present with 2360 molecules/cell in log phase SD medium.</text>
</comment>
<comment type="similarity">
    <text evidence="6">Belongs to the cyclophilin-type PPIase family. CWC27 subfamily.</text>
</comment>
<organism>
    <name type="scientific">Saccharomyces cerevisiae (strain ATCC 204508 / S288c)</name>
    <name type="common">Baker's yeast</name>
    <dbReference type="NCBI Taxonomy" id="559292"/>
    <lineage>
        <taxon>Eukaryota</taxon>
        <taxon>Fungi</taxon>
        <taxon>Dikarya</taxon>
        <taxon>Ascomycota</taxon>
        <taxon>Saccharomycotina</taxon>
        <taxon>Saccharomycetes</taxon>
        <taxon>Saccharomycetales</taxon>
        <taxon>Saccharomycetaceae</taxon>
        <taxon>Saccharomyces</taxon>
    </lineage>
</organism>
<proteinExistence type="evidence at protein level"/>